<proteinExistence type="inferred from homology"/>
<accession>C3LPS7</accession>
<organism>
    <name type="scientific">Vibrio cholerae serotype O1 (strain M66-2)</name>
    <dbReference type="NCBI Taxonomy" id="579112"/>
    <lineage>
        <taxon>Bacteria</taxon>
        <taxon>Pseudomonadati</taxon>
        <taxon>Pseudomonadota</taxon>
        <taxon>Gammaproteobacteria</taxon>
        <taxon>Vibrionales</taxon>
        <taxon>Vibrionaceae</taxon>
        <taxon>Vibrio</taxon>
    </lineage>
</organism>
<keyword id="KW-0067">ATP-binding</keyword>
<keyword id="KW-0997">Cell inner membrane</keyword>
<keyword id="KW-1003">Cell membrane</keyword>
<keyword id="KW-0418">Kinase</keyword>
<keyword id="KW-0472">Membrane</keyword>
<keyword id="KW-0547">Nucleotide-binding</keyword>
<keyword id="KW-0808">Transferase</keyword>
<keyword id="KW-0812">Transmembrane</keyword>
<keyword id="KW-1133">Transmembrane helix</keyword>
<keyword id="KW-0831">Ubiquinone biosynthesis</keyword>
<reference key="1">
    <citation type="journal article" date="2008" name="PLoS ONE">
        <title>A recalibrated molecular clock and independent origins for the cholera pandemic clones.</title>
        <authorList>
            <person name="Feng L."/>
            <person name="Reeves P.R."/>
            <person name="Lan R."/>
            <person name="Ren Y."/>
            <person name="Gao C."/>
            <person name="Zhou Z."/>
            <person name="Ren Y."/>
            <person name="Cheng J."/>
            <person name="Wang W."/>
            <person name="Wang J."/>
            <person name="Qian W."/>
            <person name="Li D."/>
            <person name="Wang L."/>
        </authorList>
    </citation>
    <scope>NUCLEOTIDE SEQUENCE [LARGE SCALE GENOMIC DNA]</scope>
    <source>
        <strain>M66-2</strain>
    </source>
</reference>
<sequence>MKPAELKRLYRIVKVQLEYGLDELLPEHHLTRAPLLARKSLFWLRNQHADKALGDRLRLALQELGPVWIKFGQMMSTRRDLFPPHIADPLAMLQDKVAPFDGLQAKQLIEEELGAPLETWFDDFDIKPLASASIAQVHTAKLKSNGRDVVLKVIRPDIRPQIDADIKLMYRVARIVAKALPEARRLKPVEVVREYEKTLLDELDLRREAANAIQLRRNFENSEELYVPEVLTDFCNETVMVSERIYGIQVSDLAGLHANGTNMKLLAERGVSVFFTQVFRDSFFHADMHPGNVFVNPNHPENPQWIGLDCGIVGTLNSEDKRYLAENFLAFFNRDYRRVAQLHVDSGWVPLDTNVDEFEVAIRMVCEPIFAKPLCEISFGHVLLNLFNTARRFNMEVQPQLVLLQKTLLYVEGLGRQLYPQLDLWQTAKPFLEKWMANQVGPQAFLHALKERAPLWFEKMPELPELLYDSLKQGRNLNQRLDNLYQGYRQSKRQQGTGKFLFGVGATLVVCSAIWISNQLEPLAIGSATIGVLCWLLSWRAYRQ</sequence>
<protein>
    <recommendedName>
        <fullName evidence="1">Probable protein kinase UbiB</fullName>
        <ecNumber evidence="1">2.7.-.-</ecNumber>
    </recommendedName>
    <alternativeName>
        <fullName evidence="1">Ubiquinone biosynthesis protein UbiB</fullName>
    </alternativeName>
</protein>
<feature type="chain" id="PRO_1000134821" description="Probable protein kinase UbiB">
    <location>
        <begin position="1"/>
        <end position="544"/>
    </location>
</feature>
<feature type="transmembrane region" description="Helical" evidence="1">
    <location>
        <begin position="496"/>
        <end position="516"/>
    </location>
</feature>
<feature type="transmembrane region" description="Helical" evidence="1">
    <location>
        <begin position="519"/>
        <end position="539"/>
    </location>
</feature>
<feature type="domain" description="Protein kinase" evidence="1">
    <location>
        <begin position="123"/>
        <end position="501"/>
    </location>
</feature>
<feature type="active site" description="Proton acceptor" evidence="1">
    <location>
        <position position="287"/>
    </location>
</feature>
<feature type="binding site" evidence="1">
    <location>
        <begin position="129"/>
        <end position="137"/>
    </location>
    <ligand>
        <name>ATP</name>
        <dbReference type="ChEBI" id="CHEBI:30616"/>
    </ligand>
</feature>
<feature type="binding site" evidence="1">
    <location>
        <position position="152"/>
    </location>
    <ligand>
        <name>ATP</name>
        <dbReference type="ChEBI" id="CHEBI:30616"/>
    </ligand>
</feature>
<name>UBIB_VIBCM</name>
<gene>
    <name evidence="1" type="primary">ubiB</name>
    <name type="ordered locus">VCM66_0085</name>
</gene>
<comment type="function">
    <text evidence="1">Is probably a protein kinase regulator of UbiI activity which is involved in aerobic coenzyme Q (ubiquinone) biosynthesis.</text>
</comment>
<comment type="pathway">
    <text>Cofactor biosynthesis; ubiquinone biosynthesis [regulation].</text>
</comment>
<comment type="subcellular location">
    <subcellularLocation>
        <location evidence="1">Cell inner membrane</location>
        <topology evidence="1">Multi-pass membrane protein</topology>
    </subcellularLocation>
</comment>
<comment type="similarity">
    <text evidence="1">Belongs to the ABC1 family. UbiB subfamily.</text>
</comment>
<dbReference type="EC" id="2.7.-.-" evidence="1"/>
<dbReference type="EMBL" id="CP001233">
    <property type="protein sequence ID" value="ACP04421.1"/>
    <property type="molecule type" value="Genomic_DNA"/>
</dbReference>
<dbReference type="RefSeq" id="WP_000801143.1">
    <property type="nucleotide sequence ID" value="NC_012578.1"/>
</dbReference>
<dbReference type="SMR" id="C3LPS7"/>
<dbReference type="GeneID" id="89513180"/>
<dbReference type="KEGG" id="vcm:VCM66_0085"/>
<dbReference type="HOGENOM" id="CLU_006533_0_0_6"/>
<dbReference type="UniPathway" id="UPA00232"/>
<dbReference type="Proteomes" id="UP000001217">
    <property type="component" value="Chromosome I"/>
</dbReference>
<dbReference type="GO" id="GO:0005886">
    <property type="term" value="C:plasma membrane"/>
    <property type="evidence" value="ECO:0007669"/>
    <property type="project" value="UniProtKB-SubCell"/>
</dbReference>
<dbReference type="GO" id="GO:0005524">
    <property type="term" value="F:ATP binding"/>
    <property type="evidence" value="ECO:0007669"/>
    <property type="project" value="UniProtKB-KW"/>
</dbReference>
<dbReference type="GO" id="GO:0004672">
    <property type="term" value="F:protein kinase activity"/>
    <property type="evidence" value="ECO:0007669"/>
    <property type="project" value="UniProtKB-UniRule"/>
</dbReference>
<dbReference type="GO" id="GO:0010795">
    <property type="term" value="P:regulation of ubiquinone biosynthetic process"/>
    <property type="evidence" value="ECO:0007669"/>
    <property type="project" value="UniProtKB-UniRule"/>
</dbReference>
<dbReference type="GO" id="GO:0006744">
    <property type="term" value="P:ubiquinone biosynthetic process"/>
    <property type="evidence" value="ECO:0007669"/>
    <property type="project" value="UniProtKB-UniPathway"/>
</dbReference>
<dbReference type="CDD" id="cd13972">
    <property type="entry name" value="UbiB"/>
    <property type="match status" value="1"/>
</dbReference>
<dbReference type="HAMAP" id="MF_00414">
    <property type="entry name" value="UbiB"/>
    <property type="match status" value="1"/>
</dbReference>
<dbReference type="InterPro" id="IPR004147">
    <property type="entry name" value="ABC1_dom"/>
</dbReference>
<dbReference type="InterPro" id="IPR011009">
    <property type="entry name" value="Kinase-like_dom_sf"/>
</dbReference>
<dbReference type="InterPro" id="IPR010232">
    <property type="entry name" value="UbiB"/>
</dbReference>
<dbReference type="InterPro" id="IPR045308">
    <property type="entry name" value="UbiB_bact"/>
</dbReference>
<dbReference type="InterPro" id="IPR050154">
    <property type="entry name" value="UbiB_kinase"/>
</dbReference>
<dbReference type="NCBIfam" id="NF003404">
    <property type="entry name" value="PRK04750.1"/>
    <property type="match status" value="1"/>
</dbReference>
<dbReference type="NCBIfam" id="TIGR01982">
    <property type="entry name" value="UbiB"/>
    <property type="match status" value="1"/>
</dbReference>
<dbReference type="PANTHER" id="PTHR10566">
    <property type="entry name" value="CHAPERONE-ACTIVITY OF BC1 COMPLEX CABC1 -RELATED"/>
    <property type="match status" value="1"/>
</dbReference>
<dbReference type="PANTHER" id="PTHR10566:SF113">
    <property type="entry name" value="PROTEIN ACTIVITY OF BC1 COMPLEX KINASE 7, CHLOROPLASTIC"/>
    <property type="match status" value="1"/>
</dbReference>
<dbReference type="Pfam" id="PF03109">
    <property type="entry name" value="ABC1"/>
    <property type="match status" value="1"/>
</dbReference>
<dbReference type="SUPFAM" id="SSF56112">
    <property type="entry name" value="Protein kinase-like (PK-like)"/>
    <property type="match status" value="1"/>
</dbReference>
<evidence type="ECO:0000255" key="1">
    <source>
        <dbReference type="HAMAP-Rule" id="MF_00414"/>
    </source>
</evidence>